<sequence length="407" mass="45402">MITWVGIDDTDTYDKGCTTYVMYNMLKEFLKTKGEWRIITYPRLIRLNPNVPFKTRGNAAVSVGLNVDDPREALELAEWAVDAYSHKIGKTSPGIVVSISNNEHWIYWKALSDVIPLNAAVKWMSKLGVIYRGGRGVIGALASVMADLSQDSTLELLAYSESTPKPSIPIDLVKKLNDSTTPLTFENVSGDYVLIQPHGNDPVIFGIRGDSPYHIIHFASMLINEVDVEPRWLIYLTNQATGHHLNSIMNKPYTTGYVEGSVNEVRLVQGGNIEIRVNSTHVFSYRHYGFKSIDKATYLIAYGGFKPGVNSLDLYMEGGVALMLNNIVKNPRCPRCGSNLESTGRVGLLKCPKCGLITGLPRLMNYTSEFTLEEPREAEVRHLHKPTARIGLEGLVNVFNRPSLWII</sequence>
<organism>
    <name type="scientific">Caldivirga maquilingensis (strain ATCC 700844 / DSM 13496 / JCM 10307 / IC-167)</name>
    <dbReference type="NCBI Taxonomy" id="397948"/>
    <lineage>
        <taxon>Archaea</taxon>
        <taxon>Thermoproteota</taxon>
        <taxon>Thermoprotei</taxon>
        <taxon>Thermoproteales</taxon>
        <taxon>Thermoproteaceae</taxon>
        <taxon>Caldivirga</taxon>
    </lineage>
</organism>
<proteinExistence type="inferred from homology"/>
<accession>A8MA77</accession>
<comment type="function">
    <text evidence="1">ATP-dependent agmatine transferase that catalyzes the formation of 2-agmatinylcytidine (agm2C) at the wobble position (C34) of tRNA(Ile2), converting the codon specificity from AUG to AUA.</text>
</comment>
<comment type="catalytic activity">
    <reaction evidence="1">
        <text>cytidine(34) in tRNA(Ile2) + agmatine + ATP + H2O = 2-agmatinylcytidine(34) in tRNA(Ile2) + AMP + 2 phosphate + 2 H(+)</text>
        <dbReference type="Rhea" id="RHEA:43608"/>
        <dbReference type="Rhea" id="RHEA-COMP:10625"/>
        <dbReference type="Rhea" id="RHEA-COMP:10626"/>
        <dbReference type="ChEBI" id="CHEBI:15377"/>
        <dbReference type="ChEBI" id="CHEBI:15378"/>
        <dbReference type="ChEBI" id="CHEBI:30616"/>
        <dbReference type="ChEBI" id="CHEBI:43474"/>
        <dbReference type="ChEBI" id="CHEBI:58145"/>
        <dbReference type="ChEBI" id="CHEBI:82748"/>
        <dbReference type="ChEBI" id="CHEBI:83545"/>
        <dbReference type="ChEBI" id="CHEBI:456215"/>
        <dbReference type="EC" id="6.3.4.22"/>
    </reaction>
</comment>
<comment type="subcellular location">
    <subcellularLocation>
        <location evidence="1">Cytoplasm</location>
    </subcellularLocation>
</comment>
<comment type="similarity">
    <text evidence="1">Belongs to the TiaS family.</text>
</comment>
<gene>
    <name evidence="1" type="primary">tiaS</name>
    <name type="ordered locus">Cmaq_0160</name>
</gene>
<protein>
    <recommendedName>
        <fullName evidence="1">tRNA(Ile2) 2-agmatinylcytidine synthetase TiaS</fullName>
        <shortName evidence="1">tRNA(Ile2)-agm2C synthetase</shortName>
        <ecNumber evidence="1">6.3.4.22</ecNumber>
    </recommendedName>
    <alternativeName>
        <fullName evidence="1">tRNA(Ile2) agmatidine synthetase</fullName>
    </alternativeName>
</protein>
<evidence type="ECO:0000255" key="1">
    <source>
        <dbReference type="HAMAP-Rule" id="MF_01892"/>
    </source>
</evidence>
<feature type="chain" id="PRO_0000407289" description="tRNA(Ile2) 2-agmatinylcytidine synthetase TiaS">
    <location>
        <begin position="1"/>
        <end position="407"/>
    </location>
</feature>
<reference key="1">
    <citation type="submission" date="2007-10" db="EMBL/GenBank/DDBJ databases">
        <title>Complete sequence of Caldivirga maquilingensis IC-167.</title>
        <authorList>
            <consortium name="US DOE Joint Genome Institute"/>
            <person name="Copeland A."/>
            <person name="Lucas S."/>
            <person name="Lapidus A."/>
            <person name="Barry K."/>
            <person name="Glavina del Rio T."/>
            <person name="Dalin E."/>
            <person name="Tice H."/>
            <person name="Pitluck S."/>
            <person name="Saunders E."/>
            <person name="Brettin T."/>
            <person name="Bruce D."/>
            <person name="Detter J.C."/>
            <person name="Han C."/>
            <person name="Schmutz J."/>
            <person name="Larimer F."/>
            <person name="Land M."/>
            <person name="Hauser L."/>
            <person name="Kyrpides N."/>
            <person name="Ivanova N."/>
            <person name="Biddle J.F."/>
            <person name="Zhang Z."/>
            <person name="Fitz-Gibbon S.T."/>
            <person name="Lowe T.M."/>
            <person name="Saltikov C."/>
            <person name="House C.H."/>
            <person name="Richardson P."/>
        </authorList>
    </citation>
    <scope>NUCLEOTIDE SEQUENCE [LARGE SCALE GENOMIC DNA]</scope>
    <source>
        <strain>ATCC 700844 / DSM 13496 / JCM 10307 / IC-167</strain>
    </source>
</reference>
<name>TIAS_CALMQ</name>
<dbReference type="EC" id="6.3.4.22" evidence="1"/>
<dbReference type="EMBL" id="CP000852">
    <property type="protein sequence ID" value="ABW01009.1"/>
    <property type="molecule type" value="Genomic_DNA"/>
</dbReference>
<dbReference type="RefSeq" id="WP_012185229.1">
    <property type="nucleotide sequence ID" value="NC_009954.1"/>
</dbReference>
<dbReference type="SMR" id="A8MA77"/>
<dbReference type="STRING" id="397948.Cmaq_0160"/>
<dbReference type="GeneID" id="5709670"/>
<dbReference type="KEGG" id="cma:Cmaq_0160"/>
<dbReference type="eggNOG" id="arCOG01115">
    <property type="taxonomic scope" value="Archaea"/>
</dbReference>
<dbReference type="HOGENOM" id="CLU_675459_0_0_2"/>
<dbReference type="OrthoDB" id="39189at2157"/>
<dbReference type="Proteomes" id="UP000001137">
    <property type="component" value="Chromosome"/>
</dbReference>
<dbReference type="GO" id="GO:0005737">
    <property type="term" value="C:cytoplasm"/>
    <property type="evidence" value="ECO:0007669"/>
    <property type="project" value="UniProtKB-SubCell"/>
</dbReference>
<dbReference type="GO" id="GO:0005524">
    <property type="term" value="F:ATP binding"/>
    <property type="evidence" value="ECO:0007669"/>
    <property type="project" value="UniProtKB-KW"/>
</dbReference>
<dbReference type="GO" id="GO:0016879">
    <property type="term" value="F:ligase activity, forming carbon-nitrogen bonds"/>
    <property type="evidence" value="ECO:0007669"/>
    <property type="project" value="UniProtKB-UniRule"/>
</dbReference>
<dbReference type="GO" id="GO:0002101">
    <property type="term" value="P:tRNA wobble cytosine modification"/>
    <property type="evidence" value="ECO:0007669"/>
    <property type="project" value="UniProtKB-UniRule"/>
</dbReference>
<dbReference type="Gene3D" id="2.40.50.1010">
    <property type="match status" value="1"/>
</dbReference>
<dbReference type="Gene3D" id="3.30.70.2200">
    <property type="match status" value="1"/>
</dbReference>
<dbReference type="Gene3D" id="3.90.600.20">
    <property type="match status" value="1"/>
</dbReference>
<dbReference type="HAMAP" id="MF_01892">
    <property type="entry name" value="tRNA_Ile2_agm2C_synt"/>
    <property type="match status" value="1"/>
</dbReference>
<dbReference type="InterPro" id="IPR053870">
    <property type="entry name" value="TiaS-like_TCKD"/>
</dbReference>
<dbReference type="InterPro" id="IPR013696">
    <property type="entry name" value="TiaS_FLD"/>
</dbReference>
<dbReference type="InterPro" id="IPR024913">
    <property type="entry name" value="tRNA_Ile2__agm2C_synt"/>
</dbReference>
<dbReference type="PANTHER" id="PTHR40705">
    <property type="entry name" value="TRNA(ILE2) 2-AGMATINYLCYTIDINE SYNTHETASE TIAS"/>
    <property type="match status" value="1"/>
</dbReference>
<dbReference type="PANTHER" id="PTHR40705:SF1">
    <property type="entry name" value="TRNA(ILE2) 2-AGMATINYLCYTIDINE SYNTHETASE TIAS"/>
    <property type="match status" value="1"/>
</dbReference>
<dbReference type="Pfam" id="PF08489">
    <property type="entry name" value="TiaS_FLD"/>
    <property type="match status" value="1"/>
</dbReference>
<dbReference type="Pfam" id="PF22641">
    <property type="entry name" value="TiaS_TCKD"/>
    <property type="match status" value="1"/>
</dbReference>
<keyword id="KW-0067">ATP-binding</keyword>
<keyword id="KW-0963">Cytoplasm</keyword>
<keyword id="KW-0436">Ligase</keyword>
<keyword id="KW-0547">Nucleotide-binding</keyword>
<keyword id="KW-1185">Reference proteome</keyword>
<keyword id="KW-0819">tRNA processing</keyword>